<dbReference type="EC" id="2.4.2.10" evidence="1"/>
<dbReference type="EMBL" id="AM920689">
    <property type="protein sequence ID" value="CAP53398.1"/>
    <property type="molecule type" value="Genomic_DNA"/>
</dbReference>
<dbReference type="SMR" id="B0RXL2"/>
<dbReference type="KEGG" id="xca:xcc-b100_4031"/>
<dbReference type="HOGENOM" id="CLU_074878_0_1_6"/>
<dbReference type="UniPathway" id="UPA00070">
    <property type="reaction ID" value="UER00119"/>
</dbReference>
<dbReference type="Proteomes" id="UP000001188">
    <property type="component" value="Chromosome"/>
</dbReference>
<dbReference type="GO" id="GO:0005737">
    <property type="term" value="C:cytoplasm"/>
    <property type="evidence" value="ECO:0007669"/>
    <property type="project" value="TreeGrafter"/>
</dbReference>
<dbReference type="GO" id="GO:0000287">
    <property type="term" value="F:magnesium ion binding"/>
    <property type="evidence" value="ECO:0007669"/>
    <property type="project" value="UniProtKB-UniRule"/>
</dbReference>
<dbReference type="GO" id="GO:0004588">
    <property type="term" value="F:orotate phosphoribosyltransferase activity"/>
    <property type="evidence" value="ECO:0007669"/>
    <property type="project" value="UniProtKB-UniRule"/>
</dbReference>
<dbReference type="GO" id="GO:0006207">
    <property type="term" value="P:'de novo' pyrimidine nucleobase biosynthetic process"/>
    <property type="evidence" value="ECO:0007669"/>
    <property type="project" value="TreeGrafter"/>
</dbReference>
<dbReference type="GO" id="GO:0044205">
    <property type="term" value="P:'de novo' UMP biosynthetic process"/>
    <property type="evidence" value="ECO:0007669"/>
    <property type="project" value="UniProtKB-UniRule"/>
</dbReference>
<dbReference type="GO" id="GO:0046132">
    <property type="term" value="P:pyrimidine ribonucleoside biosynthetic process"/>
    <property type="evidence" value="ECO:0007669"/>
    <property type="project" value="TreeGrafter"/>
</dbReference>
<dbReference type="CDD" id="cd06223">
    <property type="entry name" value="PRTases_typeI"/>
    <property type="match status" value="1"/>
</dbReference>
<dbReference type="FunFam" id="3.40.50.2020:FF:000052">
    <property type="entry name" value="Orotate phosphoribosyltransferase"/>
    <property type="match status" value="1"/>
</dbReference>
<dbReference type="Gene3D" id="3.40.50.2020">
    <property type="match status" value="1"/>
</dbReference>
<dbReference type="HAMAP" id="MF_01208">
    <property type="entry name" value="PyrE"/>
    <property type="match status" value="1"/>
</dbReference>
<dbReference type="InterPro" id="IPR023031">
    <property type="entry name" value="OPRT"/>
</dbReference>
<dbReference type="InterPro" id="IPR004467">
    <property type="entry name" value="Or_phspho_trans_dom"/>
</dbReference>
<dbReference type="InterPro" id="IPR000836">
    <property type="entry name" value="PRibTrfase_dom"/>
</dbReference>
<dbReference type="InterPro" id="IPR029057">
    <property type="entry name" value="PRTase-like"/>
</dbReference>
<dbReference type="NCBIfam" id="TIGR00336">
    <property type="entry name" value="pyrE"/>
    <property type="match status" value="1"/>
</dbReference>
<dbReference type="PANTHER" id="PTHR46683">
    <property type="entry name" value="OROTATE PHOSPHORIBOSYLTRANSFERASE 1-RELATED"/>
    <property type="match status" value="1"/>
</dbReference>
<dbReference type="PANTHER" id="PTHR46683:SF1">
    <property type="entry name" value="OROTATE PHOSPHORIBOSYLTRANSFERASE 1-RELATED"/>
    <property type="match status" value="1"/>
</dbReference>
<dbReference type="Pfam" id="PF00156">
    <property type="entry name" value="Pribosyltran"/>
    <property type="match status" value="1"/>
</dbReference>
<dbReference type="SUPFAM" id="SSF53271">
    <property type="entry name" value="PRTase-like"/>
    <property type="match status" value="1"/>
</dbReference>
<dbReference type="PROSITE" id="PS00103">
    <property type="entry name" value="PUR_PYR_PR_TRANSFER"/>
    <property type="match status" value="1"/>
</dbReference>
<keyword id="KW-0328">Glycosyltransferase</keyword>
<keyword id="KW-0460">Magnesium</keyword>
<keyword id="KW-0665">Pyrimidine biosynthesis</keyword>
<keyword id="KW-0808">Transferase</keyword>
<accession>B0RXL2</accession>
<gene>
    <name evidence="1" type="primary">pyrE</name>
    <name type="ordered locus">xcc-b100_4031</name>
</gene>
<sequence>MTDHRTRFLQLALDADALRFGEFTLKSGRLSPYFFNAGRFDSGAKTAQLAQCYADAIDAAGVEFDLLFGPAYKGIPLATALACAYAGRGRDLPLAFNRKEAKDHGEGGTLIGAPLQGRKVLIVDDVITAGTAIREALGIIRAAGGTPSGIVVALDRQEIASEQDRRSAAQAVAAEAGIPVIAVANLADLLAFAAGNADLVGFREPLLAYRGRYGTDTTG</sequence>
<name>PYRE_XANCB</name>
<comment type="function">
    <text evidence="1">Catalyzes the transfer of a ribosyl phosphate group from 5-phosphoribose 1-diphosphate to orotate, leading to the formation of orotidine monophosphate (OMP).</text>
</comment>
<comment type="catalytic activity">
    <reaction evidence="1">
        <text>orotidine 5'-phosphate + diphosphate = orotate + 5-phospho-alpha-D-ribose 1-diphosphate</text>
        <dbReference type="Rhea" id="RHEA:10380"/>
        <dbReference type="ChEBI" id="CHEBI:30839"/>
        <dbReference type="ChEBI" id="CHEBI:33019"/>
        <dbReference type="ChEBI" id="CHEBI:57538"/>
        <dbReference type="ChEBI" id="CHEBI:58017"/>
        <dbReference type="EC" id="2.4.2.10"/>
    </reaction>
</comment>
<comment type="cofactor">
    <cofactor evidence="1">
        <name>Mg(2+)</name>
        <dbReference type="ChEBI" id="CHEBI:18420"/>
    </cofactor>
</comment>
<comment type="pathway">
    <text evidence="1">Pyrimidine metabolism; UMP biosynthesis via de novo pathway; UMP from orotate: step 1/2.</text>
</comment>
<comment type="subunit">
    <text evidence="1">Homodimer.</text>
</comment>
<comment type="similarity">
    <text evidence="1">Belongs to the purine/pyrimidine phosphoribosyltransferase family. PyrE subfamily.</text>
</comment>
<reference key="1">
    <citation type="journal article" date="2008" name="J. Biotechnol.">
        <title>The genome of Xanthomonas campestris pv. campestris B100 and its use for the reconstruction of metabolic pathways involved in xanthan biosynthesis.</title>
        <authorList>
            <person name="Vorhoelter F.-J."/>
            <person name="Schneiker S."/>
            <person name="Goesmann A."/>
            <person name="Krause L."/>
            <person name="Bekel T."/>
            <person name="Kaiser O."/>
            <person name="Linke B."/>
            <person name="Patschkowski T."/>
            <person name="Rueckert C."/>
            <person name="Schmid J."/>
            <person name="Sidhu V.K."/>
            <person name="Sieber V."/>
            <person name="Tauch A."/>
            <person name="Watt S.A."/>
            <person name="Weisshaar B."/>
            <person name="Becker A."/>
            <person name="Niehaus K."/>
            <person name="Puehler A."/>
        </authorList>
    </citation>
    <scope>NUCLEOTIDE SEQUENCE [LARGE SCALE GENOMIC DNA]</scope>
    <source>
        <strain>B100</strain>
    </source>
</reference>
<feature type="chain" id="PRO_1000138841" description="Orotate phosphoribosyltransferase">
    <location>
        <begin position="1"/>
        <end position="219"/>
    </location>
</feature>
<feature type="binding site" description="in other chain" evidence="1">
    <location>
        <position position="26"/>
    </location>
    <ligand>
        <name>5-phospho-alpha-D-ribose 1-diphosphate</name>
        <dbReference type="ChEBI" id="CHEBI:58017"/>
        <note>ligand shared between dimeric partners</note>
    </ligand>
</feature>
<feature type="binding site" evidence="1">
    <location>
        <begin position="34"/>
        <end position="35"/>
    </location>
    <ligand>
        <name>orotate</name>
        <dbReference type="ChEBI" id="CHEBI:30839"/>
    </ligand>
</feature>
<feature type="binding site" description="in other chain" evidence="1">
    <location>
        <begin position="72"/>
        <end position="73"/>
    </location>
    <ligand>
        <name>5-phospho-alpha-D-ribose 1-diphosphate</name>
        <dbReference type="ChEBI" id="CHEBI:58017"/>
        <note>ligand shared between dimeric partners</note>
    </ligand>
</feature>
<feature type="binding site" evidence="1">
    <location>
        <position position="98"/>
    </location>
    <ligand>
        <name>5-phospho-alpha-D-ribose 1-diphosphate</name>
        <dbReference type="ChEBI" id="CHEBI:58017"/>
        <note>ligand shared between dimeric partners</note>
    </ligand>
</feature>
<feature type="binding site" description="in other chain" evidence="1">
    <location>
        <position position="99"/>
    </location>
    <ligand>
        <name>5-phospho-alpha-D-ribose 1-diphosphate</name>
        <dbReference type="ChEBI" id="CHEBI:58017"/>
        <note>ligand shared between dimeric partners</note>
    </ligand>
</feature>
<feature type="binding site" evidence="1">
    <location>
        <position position="102"/>
    </location>
    <ligand>
        <name>5-phospho-alpha-D-ribose 1-diphosphate</name>
        <dbReference type="ChEBI" id="CHEBI:58017"/>
        <note>ligand shared between dimeric partners</note>
    </ligand>
</feature>
<feature type="binding site" evidence="1">
    <location>
        <position position="104"/>
    </location>
    <ligand>
        <name>5-phospho-alpha-D-ribose 1-diphosphate</name>
        <dbReference type="ChEBI" id="CHEBI:58017"/>
        <note>ligand shared between dimeric partners</note>
    </ligand>
</feature>
<feature type="binding site" description="in other chain" evidence="1">
    <location>
        <begin position="124"/>
        <end position="132"/>
    </location>
    <ligand>
        <name>5-phospho-alpha-D-ribose 1-diphosphate</name>
        <dbReference type="ChEBI" id="CHEBI:58017"/>
        <note>ligand shared between dimeric partners</note>
    </ligand>
</feature>
<feature type="binding site" evidence="1">
    <location>
        <position position="128"/>
    </location>
    <ligand>
        <name>orotate</name>
        <dbReference type="ChEBI" id="CHEBI:30839"/>
    </ligand>
</feature>
<feature type="binding site" evidence="1">
    <location>
        <position position="156"/>
    </location>
    <ligand>
        <name>orotate</name>
        <dbReference type="ChEBI" id="CHEBI:30839"/>
    </ligand>
</feature>
<evidence type="ECO:0000255" key="1">
    <source>
        <dbReference type="HAMAP-Rule" id="MF_01208"/>
    </source>
</evidence>
<proteinExistence type="inferred from homology"/>
<protein>
    <recommendedName>
        <fullName evidence="1">Orotate phosphoribosyltransferase</fullName>
        <shortName evidence="1">OPRT</shortName>
        <shortName evidence="1">OPRTase</shortName>
        <ecNumber evidence="1">2.4.2.10</ecNumber>
    </recommendedName>
</protein>
<organism>
    <name type="scientific">Xanthomonas campestris pv. campestris (strain B100)</name>
    <dbReference type="NCBI Taxonomy" id="509169"/>
    <lineage>
        <taxon>Bacteria</taxon>
        <taxon>Pseudomonadati</taxon>
        <taxon>Pseudomonadota</taxon>
        <taxon>Gammaproteobacteria</taxon>
        <taxon>Lysobacterales</taxon>
        <taxon>Lysobacteraceae</taxon>
        <taxon>Xanthomonas</taxon>
    </lineage>
</organism>